<sequence>MTQFASPVLHSLLDTDAYKLHMQQAVFHHYYDVQVAAEFRCRGDDLLGIYADAIREQVDAMQHLRLQEDEFQWLSGLPFFKPDYLNWLREFRYNPAQVCVTNDNGKLNIRLTGPWREVIMWEVPLLAVISELVHHYRSPNAGVDQALDALESKLVDFTALTANLDMSRFHLMDFGTRRRFSREVQQAIVKRLQQESWFVGTSNYDLARRLALTPMGTQAHEWFQAHQQISPDLATSQRAALAAWLNEYPDQLGIALTDCITMDAFLRDFGIEFASRYQGLRHDSGDPVAWGEKAIAHYEKLGIDPLTKTLVFSDNLDLPKAVELYRHFASRVQLSFGIGTRLTCDIPQVKPLNIVIKLVECNGKPVAKLSDSPGKTICHDKAFVRALRKAFDLPQVRKAS</sequence>
<protein>
    <recommendedName>
        <fullName evidence="1">Nicotinate phosphoribosyltransferase</fullName>
        <shortName evidence="1">NAPRTase</shortName>
        <ecNumber evidence="1">6.3.4.21</ecNumber>
    </recommendedName>
</protein>
<evidence type="ECO:0000255" key="1">
    <source>
        <dbReference type="HAMAP-Rule" id="MF_00570"/>
    </source>
</evidence>
<comment type="function">
    <text evidence="1">Catalyzes the synthesis of beta-nicotinate D-ribonucleotide from nicotinate and 5-phospho-D-ribose 1-phosphate at the expense of ATP.</text>
</comment>
<comment type="catalytic activity">
    <reaction evidence="1">
        <text>nicotinate + 5-phospho-alpha-D-ribose 1-diphosphate + ATP + H2O = nicotinate beta-D-ribonucleotide + ADP + phosphate + diphosphate</text>
        <dbReference type="Rhea" id="RHEA:36163"/>
        <dbReference type="ChEBI" id="CHEBI:15377"/>
        <dbReference type="ChEBI" id="CHEBI:30616"/>
        <dbReference type="ChEBI" id="CHEBI:32544"/>
        <dbReference type="ChEBI" id="CHEBI:33019"/>
        <dbReference type="ChEBI" id="CHEBI:43474"/>
        <dbReference type="ChEBI" id="CHEBI:57502"/>
        <dbReference type="ChEBI" id="CHEBI:58017"/>
        <dbReference type="ChEBI" id="CHEBI:456216"/>
        <dbReference type="EC" id="6.3.4.21"/>
    </reaction>
</comment>
<comment type="pathway">
    <text evidence="1">Cofactor biosynthesis; NAD(+) biosynthesis; nicotinate D-ribonucleotide from nicotinate: step 1/1.</text>
</comment>
<comment type="PTM">
    <text evidence="1">Transiently phosphorylated on a His residue during the reaction cycle. Phosphorylation strongly increases the affinity for substrates and increases the rate of nicotinate D-ribonucleotide production. Dephosphorylation regenerates the low-affinity form of the enzyme, leading to product release.</text>
</comment>
<comment type="similarity">
    <text evidence="1">Belongs to the NAPRTase family.</text>
</comment>
<keyword id="KW-0436">Ligase</keyword>
<keyword id="KW-0597">Phosphoprotein</keyword>
<keyword id="KW-0662">Pyridine nucleotide biosynthesis</keyword>
<gene>
    <name evidence="1" type="primary">pncB</name>
    <name type="ordered locus">SPC_1006</name>
</gene>
<reference key="1">
    <citation type="journal article" date="2009" name="PLoS ONE">
        <title>Salmonella paratyphi C: genetic divergence from Salmonella choleraesuis and pathogenic convergence with Salmonella typhi.</title>
        <authorList>
            <person name="Liu W.-Q."/>
            <person name="Feng Y."/>
            <person name="Wang Y."/>
            <person name="Zou Q.-H."/>
            <person name="Chen F."/>
            <person name="Guo J.-T."/>
            <person name="Peng Y.-H."/>
            <person name="Jin Y."/>
            <person name="Li Y.-G."/>
            <person name="Hu S.-N."/>
            <person name="Johnston R.N."/>
            <person name="Liu G.-R."/>
            <person name="Liu S.-L."/>
        </authorList>
    </citation>
    <scope>NUCLEOTIDE SEQUENCE [LARGE SCALE GENOMIC DNA]</scope>
    <source>
        <strain>RKS4594</strain>
    </source>
</reference>
<dbReference type="EC" id="6.3.4.21" evidence="1"/>
<dbReference type="EMBL" id="CP000857">
    <property type="protein sequence ID" value="ACN45172.1"/>
    <property type="molecule type" value="Genomic_DNA"/>
</dbReference>
<dbReference type="RefSeq" id="WP_000191404.1">
    <property type="nucleotide sequence ID" value="NC_012125.1"/>
</dbReference>
<dbReference type="SMR" id="C0PXX2"/>
<dbReference type="KEGG" id="sei:SPC_1006"/>
<dbReference type="HOGENOM" id="CLU_030991_1_0_6"/>
<dbReference type="UniPathway" id="UPA00253">
    <property type="reaction ID" value="UER00457"/>
</dbReference>
<dbReference type="Proteomes" id="UP000001599">
    <property type="component" value="Chromosome"/>
</dbReference>
<dbReference type="GO" id="GO:0005829">
    <property type="term" value="C:cytosol"/>
    <property type="evidence" value="ECO:0007669"/>
    <property type="project" value="TreeGrafter"/>
</dbReference>
<dbReference type="GO" id="GO:0004516">
    <property type="term" value="F:nicotinate phosphoribosyltransferase activity"/>
    <property type="evidence" value="ECO:0007669"/>
    <property type="project" value="UniProtKB-UniRule"/>
</dbReference>
<dbReference type="GO" id="GO:0034355">
    <property type="term" value="P:NAD biosynthetic process via the salvage pathway"/>
    <property type="evidence" value="ECO:0007669"/>
    <property type="project" value="TreeGrafter"/>
</dbReference>
<dbReference type="CDD" id="cd01401">
    <property type="entry name" value="PncB_like"/>
    <property type="match status" value="1"/>
</dbReference>
<dbReference type="FunFam" id="3.20.140.10:FF:000001">
    <property type="entry name" value="Nicotinate phosphoribosyltransferase"/>
    <property type="match status" value="1"/>
</dbReference>
<dbReference type="Gene3D" id="3.20.140.10">
    <property type="entry name" value="nicotinate phosphoribosyltransferase"/>
    <property type="match status" value="1"/>
</dbReference>
<dbReference type="HAMAP" id="MF_00570">
    <property type="entry name" value="NAPRTase"/>
    <property type="match status" value="1"/>
</dbReference>
<dbReference type="InterPro" id="IPR041525">
    <property type="entry name" value="N/Namide_PRibTrfase"/>
</dbReference>
<dbReference type="InterPro" id="IPR040727">
    <property type="entry name" value="NAPRTase_N"/>
</dbReference>
<dbReference type="InterPro" id="IPR006406">
    <property type="entry name" value="Nic_PRibTrfase"/>
</dbReference>
<dbReference type="InterPro" id="IPR007229">
    <property type="entry name" value="Nic_PRibTrfase-Fam"/>
</dbReference>
<dbReference type="InterPro" id="IPR036068">
    <property type="entry name" value="Nicotinate_pribotase-like_C"/>
</dbReference>
<dbReference type="NCBIfam" id="TIGR01514">
    <property type="entry name" value="NAPRTase"/>
    <property type="match status" value="1"/>
</dbReference>
<dbReference type="NCBIfam" id="NF003704">
    <property type="entry name" value="PRK05321.1"/>
    <property type="match status" value="1"/>
</dbReference>
<dbReference type="PANTHER" id="PTHR11098">
    <property type="entry name" value="NICOTINATE PHOSPHORIBOSYLTRANSFERASE"/>
    <property type="match status" value="1"/>
</dbReference>
<dbReference type="PANTHER" id="PTHR11098:SF1">
    <property type="entry name" value="NICOTINATE PHOSPHORIBOSYLTRANSFERASE"/>
    <property type="match status" value="1"/>
</dbReference>
<dbReference type="Pfam" id="PF04095">
    <property type="entry name" value="NAPRTase"/>
    <property type="match status" value="1"/>
</dbReference>
<dbReference type="Pfam" id="PF17767">
    <property type="entry name" value="NAPRTase_N"/>
    <property type="match status" value="1"/>
</dbReference>
<dbReference type="PIRSF" id="PIRSF000484">
    <property type="entry name" value="NAPRT"/>
    <property type="match status" value="1"/>
</dbReference>
<dbReference type="SUPFAM" id="SSF51690">
    <property type="entry name" value="Nicotinate/Quinolinate PRTase C-terminal domain-like"/>
    <property type="match status" value="1"/>
</dbReference>
<dbReference type="SUPFAM" id="SSF54675">
    <property type="entry name" value="Nicotinate/Quinolinate PRTase N-terminal domain-like"/>
    <property type="match status" value="1"/>
</dbReference>
<feature type="chain" id="PRO_1000191532" description="Nicotinate phosphoribosyltransferase">
    <location>
        <begin position="1"/>
        <end position="400"/>
    </location>
</feature>
<feature type="modified residue" description="Phosphohistidine; by autocatalysis" evidence="1">
    <location>
        <position position="220"/>
    </location>
</feature>
<organism>
    <name type="scientific">Salmonella paratyphi C (strain RKS4594)</name>
    <dbReference type="NCBI Taxonomy" id="476213"/>
    <lineage>
        <taxon>Bacteria</taxon>
        <taxon>Pseudomonadati</taxon>
        <taxon>Pseudomonadota</taxon>
        <taxon>Gammaproteobacteria</taxon>
        <taxon>Enterobacterales</taxon>
        <taxon>Enterobacteriaceae</taxon>
        <taxon>Salmonella</taxon>
    </lineage>
</organism>
<proteinExistence type="inferred from homology"/>
<accession>C0PXX2</accession>
<name>PNCB_SALPC</name>